<feature type="chain" id="PRO_1000071723" description="DNA repair protein RecO">
    <location>
        <begin position="1"/>
        <end position="250"/>
    </location>
</feature>
<keyword id="KW-0227">DNA damage</keyword>
<keyword id="KW-0233">DNA recombination</keyword>
<keyword id="KW-0234">DNA repair</keyword>
<proteinExistence type="inferred from homology"/>
<organism>
    <name type="scientific">Staphylococcus aureus (strain Newman)</name>
    <dbReference type="NCBI Taxonomy" id="426430"/>
    <lineage>
        <taxon>Bacteria</taxon>
        <taxon>Bacillati</taxon>
        <taxon>Bacillota</taxon>
        <taxon>Bacilli</taxon>
        <taxon>Bacillales</taxon>
        <taxon>Staphylococcaceae</taxon>
        <taxon>Staphylococcus</taxon>
    </lineage>
</organism>
<protein>
    <recommendedName>
        <fullName evidence="1">DNA repair protein RecO</fullName>
    </recommendedName>
    <alternativeName>
        <fullName evidence="1">Recombination protein O</fullName>
    </alternativeName>
</protein>
<gene>
    <name evidence="1" type="primary">recO</name>
    <name type="ordered locus">NWMN_1469</name>
</gene>
<dbReference type="EMBL" id="AP009351">
    <property type="protein sequence ID" value="BAF67741.1"/>
    <property type="molecule type" value="Genomic_DNA"/>
</dbReference>
<dbReference type="SMR" id="A6QHA9"/>
<dbReference type="KEGG" id="sae:NWMN_1469"/>
<dbReference type="HOGENOM" id="CLU_066632_4_0_9"/>
<dbReference type="Proteomes" id="UP000006386">
    <property type="component" value="Chromosome"/>
</dbReference>
<dbReference type="GO" id="GO:0043590">
    <property type="term" value="C:bacterial nucleoid"/>
    <property type="evidence" value="ECO:0007669"/>
    <property type="project" value="TreeGrafter"/>
</dbReference>
<dbReference type="GO" id="GO:0006310">
    <property type="term" value="P:DNA recombination"/>
    <property type="evidence" value="ECO:0007669"/>
    <property type="project" value="UniProtKB-UniRule"/>
</dbReference>
<dbReference type="GO" id="GO:0006302">
    <property type="term" value="P:double-strand break repair"/>
    <property type="evidence" value="ECO:0007669"/>
    <property type="project" value="TreeGrafter"/>
</dbReference>
<dbReference type="Gene3D" id="2.40.50.140">
    <property type="entry name" value="Nucleic acid-binding proteins"/>
    <property type="match status" value="1"/>
</dbReference>
<dbReference type="Gene3D" id="1.20.1440.120">
    <property type="entry name" value="Recombination protein O, C-terminal domain"/>
    <property type="match status" value="1"/>
</dbReference>
<dbReference type="HAMAP" id="MF_00201">
    <property type="entry name" value="RecO"/>
    <property type="match status" value="1"/>
</dbReference>
<dbReference type="InterPro" id="IPR037278">
    <property type="entry name" value="ARFGAP/RecO"/>
</dbReference>
<dbReference type="InterPro" id="IPR022572">
    <property type="entry name" value="DNA_rep/recomb_RecO_N"/>
</dbReference>
<dbReference type="InterPro" id="IPR012340">
    <property type="entry name" value="NA-bd_OB-fold"/>
</dbReference>
<dbReference type="InterPro" id="IPR003717">
    <property type="entry name" value="RecO"/>
</dbReference>
<dbReference type="InterPro" id="IPR042242">
    <property type="entry name" value="RecO_C"/>
</dbReference>
<dbReference type="NCBIfam" id="TIGR00613">
    <property type="entry name" value="reco"/>
    <property type="match status" value="1"/>
</dbReference>
<dbReference type="PANTHER" id="PTHR33991">
    <property type="entry name" value="DNA REPAIR PROTEIN RECO"/>
    <property type="match status" value="1"/>
</dbReference>
<dbReference type="PANTHER" id="PTHR33991:SF1">
    <property type="entry name" value="DNA REPAIR PROTEIN RECO"/>
    <property type="match status" value="1"/>
</dbReference>
<dbReference type="Pfam" id="PF02565">
    <property type="entry name" value="RecO_C"/>
    <property type="match status" value="1"/>
</dbReference>
<dbReference type="Pfam" id="PF11967">
    <property type="entry name" value="RecO_N"/>
    <property type="match status" value="1"/>
</dbReference>
<dbReference type="SUPFAM" id="SSF57863">
    <property type="entry name" value="ArfGap/RecO-like zinc finger"/>
    <property type="match status" value="1"/>
</dbReference>
<dbReference type="SUPFAM" id="SSF50249">
    <property type="entry name" value="Nucleic acid-binding proteins"/>
    <property type="match status" value="1"/>
</dbReference>
<name>RECO_STAAE</name>
<sequence length="250" mass="28450">MLMRQKGIIIKAVDYGESDKIITILNEHGAKVPLMARRAKKVKTGLQAQTQLFVYGLFIYNQWRGMGTLNSVDVISQHYKLQMDLYVSSYAALAAETIERSMDEGDIAPYNYQLLQFVLEKIESGTSAQLMSVVVMLKCMKRFGFTASFNRCAVSGNDTQADLIGYSFKFDGAISRQEASKDVHAVILSNKTLYLLDVLQKLPIDKMNSLNIHQEIIDEMSDIILMLYREYAGMFFKSQKLINQLKRLEQ</sequence>
<reference key="1">
    <citation type="journal article" date="2008" name="J. Bacteriol.">
        <title>Genome sequence of Staphylococcus aureus strain Newman and comparative analysis of staphylococcal genomes: polymorphism and evolution of two major pathogenicity islands.</title>
        <authorList>
            <person name="Baba T."/>
            <person name="Bae T."/>
            <person name="Schneewind O."/>
            <person name="Takeuchi F."/>
            <person name="Hiramatsu K."/>
        </authorList>
    </citation>
    <scope>NUCLEOTIDE SEQUENCE [LARGE SCALE GENOMIC DNA]</scope>
    <source>
        <strain>Newman</strain>
    </source>
</reference>
<evidence type="ECO:0000255" key="1">
    <source>
        <dbReference type="HAMAP-Rule" id="MF_00201"/>
    </source>
</evidence>
<comment type="function">
    <text evidence="1">Involved in DNA repair and RecF pathway recombination.</text>
</comment>
<comment type="similarity">
    <text evidence="1">Belongs to the RecO family.</text>
</comment>
<accession>A6QHA9</accession>